<keyword id="KW-0004">4Fe-4S</keyword>
<keyword id="KW-0963">Cytoplasm</keyword>
<keyword id="KW-1015">Disulfide bond</keyword>
<keyword id="KW-0408">Iron</keyword>
<keyword id="KW-0411">Iron-sulfur</keyword>
<keyword id="KW-0479">Metal-binding</keyword>
<keyword id="KW-0489">Methyltransferase</keyword>
<keyword id="KW-1185">Reference proteome</keyword>
<keyword id="KW-0698">rRNA processing</keyword>
<keyword id="KW-0949">S-adenosyl-L-methionine</keyword>
<keyword id="KW-0808">Transferase</keyword>
<keyword id="KW-0819">tRNA processing</keyword>
<accession>A8LNF0</accession>
<evidence type="ECO:0000255" key="1">
    <source>
        <dbReference type="HAMAP-Rule" id="MF_01849"/>
    </source>
</evidence>
<evidence type="ECO:0000255" key="2">
    <source>
        <dbReference type="PROSITE-ProRule" id="PRU01266"/>
    </source>
</evidence>
<evidence type="ECO:0000305" key="3"/>
<name>RLMN_DINSH</name>
<protein>
    <recommendedName>
        <fullName evidence="1">Dual-specificity RNA methyltransferase RlmN</fullName>
        <ecNumber evidence="1">2.1.1.192</ecNumber>
    </recommendedName>
    <alternativeName>
        <fullName evidence="1">23S rRNA (adenine(2503)-C(2))-methyltransferase</fullName>
    </alternativeName>
    <alternativeName>
        <fullName evidence="1">23S rRNA m2A2503 methyltransferase</fullName>
    </alternativeName>
    <alternativeName>
        <fullName evidence="1">Ribosomal RNA large subunit methyltransferase N</fullName>
    </alternativeName>
    <alternativeName>
        <fullName evidence="1">tRNA (adenine(37)-C(2))-methyltransferase</fullName>
    </alternativeName>
    <alternativeName>
        <fullName evidence="1">tRNA m2A37 methyltransferase</fullName>
    </alternativeName>
</protein>
<sequence>MSATSPITQDVVTFPRKLPEGGKRNLVGLTRPELAEALAAAGTPEKQVKMRVNQIWQWLYERGVRDFNDMTNLAKPYRALLADQFEIAVPEVVSRHVSEDGTRKYLVRIAGGHEVEVVYIPEEDRGTLCVSSQVGCTLTCSFCHTGTQKLVRNLTAGEIVGQIMIARDDLGEWPLPGRNPKNETRLLSNIVLMGMGEPLYNFEAVRDAMKIAMDPEGISLSRRRITLSTSGVVPEIARTAEEIGCMLAVSFHATTDEVRDKLVPINKRWNIATLLDALRDYPKASNSERITFEYVMLKGVNDSDEDARRLVELIKGIPAKINLIPFNEWPGAPYERSSNNRIRAFADIIYKAGYASPIRTPRGEDIMAACGQLKSATERARKSRAQIAAETGLG</sequence>
<organism>
    <name type="scientific">Dinoroseobacter shibae (strain DSM 16493 / NCIMB 14021 / DFL 12)</name>
    <dbReference type="NCBI Taxonomy" id="398580"/>
    <lineage>
        <taxon>Bacteria</taxon>
        <taxon>Pseudomonadati</taxon>
        <taxon>Pseudomonadota</taxon>
        <taxon>Alphaproteobacteria</taxon>
        <taxon>Rhodobacterales</taxon>
        <taxon>Roseobacteraceae</taxon>
        <taxon>Dinoroseobacter</taxon>
    </lineage>
</organism>
<comment type="function">
    <text evidence="1">Specifically methylates position 2 of adenine 2503 in 23S rRNA and position 2 of adenine 37 in tRNAs. m2A2503 modification seems to play a crucial role in the proofreading step occurring at the peptidyl transferase center and thus would serve to optimize ribosomal fidelity.</text>
</comment>
<comment type="catalytic activity">
    <reaction evidence="1">
        <text>adenosine(2503) in 23S rRNA + 2 reduced [2Fe-2S]-[ferredoxin] + 2 S-adenosyl-L-methionine = 2-methyladenosine(2503) in 23S rRNA + 5'-deoxyadenosine + L-methionine + 2 oxidized [2Fe-2S]-[ferredoxin] + S-adenosyl-L-homocysteine</text>
        <dbReference type="Rhea" id="RHEA:42916"/>
        <dbReference type="Rhea" id="RHEA-COMP:10000"/>
        <dbReference type="Rhea" id="RHEA-COMP:10001"/>
        <dbReference type="Rhea" id="RHEA-COMP:10152"/>
        <dbReference type="Rhea" id="RHEA-COMP:10282"/>
        <dbReference type="ChEBI" id="CHEBI:17319"/>
        <dbReference type="ChEBI" id="CHEBI:33737"/>
        <dbReference type="ChEBI" id="CHEBI:33738"/>
        <dbReference type="ChEBI" id="CHEBI:57844"/>
        <dbReference type="ChEBI" id="CHEBI:57856"/>
        <dbReference type="ChEBI" id="CHEBI:59789"/>
        <dbReference type="ChEBI" id="CHEBI:74411"/>
        <dbReference type="ChEBI" id="CHEBI:74497"/>
        <dbReference type="EC" id="2.1.1.192"/>
    </reaction>
</comment>
<comment type="catalytic activity">
    <reaction evidence="1">
        <text>adenosine(37) in tRNA + 2 reduced [2Fe-2S]-[ferredoxin] + 2 S-adenosyl-L-methionine = 2-methyladenosine(37) in tRNA + 5'-deoxyadenosine + L-methionine + 2 oxidized [2Fe-2S]-[ferredoxin] + S-adenosyl-L-homocysteine</text>
        <dbReference type="Rhea" id="RHEA:43332"/>
        <dbReference type="Rhea" id="RHEA-COMP:10000"/>
        <dbReference type="Rhea" id="RHEA-COMP:10001"/>
        <dbReference type="Rhea" id="RHEA-COMP:10162"/>
        <dbReference type="Rhea" id="RHEA-COMP:10485"/>
        <dbReference type="ChEBI" id="CHEBI:17319"/>
        <dbReference type="ChEBI" id="CHEBI:33737"/>
        <dbReference type="ChEBI" id="CHEBI:33738"/>
        <dbReference type="ChEBI" id="CHEBI:57844"/>
        <dbReference type="ChEBI" id="CHEBI:57856"/>
        <dbReference type="ChEBI" id="CHEBI:59789"/>
        <dbReference type="ChEBI" id="CHEBI:74411"/>
        <dbReference type="ChEBI" id="CHEBI:74497"/>
        <dbReference type="EC" id="2.1.1.192"/>
    </reaction>
</comment>
<comment type="cofactor">
    <cofactor evidence="1">
        <name>[4Fe-4S] cluster</name>
        <dbReference type="ChEBI" id="CHEBI:49883"/>
    </cofactor>
    <text evidence="1">Binds 1 [4Fe-4S] cluster. The cluster is coordinated with 3 cysteines and an exchangeable S-adenosyl-L-methionine.</text>
</comment>
<comment type="subcellular location">
    <subcellularLocation>
        <location evidence="1">Cytoplasm</location>
    </subcellularLocation>
</comment>
<comment type="miscellaneous">
    <text evidence="1">Reaction proceeds by a ping-pong mechanism involving intermediate methylation of a conserved cysteine residue.</text>
</comment>
<comment type="similarity">
    <text evidence="1">Belongs to the radical SAM superfamily. RlmN family.</text>
</comment>
<comment type="sequence caution" evidence="3">
    <conflict type="erroneous initiation">
        <sequence resource="EMBL-CDS" id="ABV95044"/>
    </conflict>
</comment>
<proteinExistence type="inferred from homology"/>
<reference key="1">
    <citation type="journal article" date="2010" name="ISME J.">
        <title>The complete genome sequence of the algal symbiont Dinoroseobacter shibae: a hitchhiker's guide to life in the sea.</title>
        <authorList>
            <person name="Wagner-Dobler I."/>
            <person name="Ballhausen B."/>
            <person name="Berger M."/>
            <person name="Brinkhoff T."/>
            <person name="Buchholz I."/>
            <person name="Bunk B."/>
            <person name="Cypionka H."/>
            <person name="Daniel R."/>
            <person name="Drepper T."/>
            <person name="Gerdts G."/>
            <person name="Hahnke S."/>
            <person name="Han C."/>
            <person name="Jahn D."/>
            <person name="Kalhoefer D."/>
            <person name="Kiss H."/>
            <person name="Klenk H.P."/>
            <person name="Kyrpides N."/>
            <person name="Liebl W."/>
            <person name="Liesegang H."/>
            <person name="Meincke L."/>
            <person name="Pati A."/>
            <person name="Petersen J."/>
            <person name="Piekarski T."/>
            <person name="Pommerenke C."/>
            <person name="Pradella S."/>
            <person name="Pukall R."/>
            <person name="Rabus R."/>
            <person name="Stackebrandt E."/>
            <person name="Thole S."/>
            <person name="Thompson L."/>
            <person name="Tielen P."/>
            <person name="Tomasch J."/>
            <person name="von Jan M."/>
            <person name="Wanphrut N."/>
            <person name="Wichels A."/>
            <person name="Zech H."/>
            <person name="Simon M."/>
        </authorList>
    </citation>
    <scope>NUCLEOTIDE SEQUENCE [LARGE SCALE GENOMIC DNA]</scope>
    <source>
        <strain>DSM 16493 / NCIMB 14021 / DFL 12</strain>
    </source>
</reference>
<feature type="chain" id="PRO_0000350158" description="Dual-specificity RNA methyltransferase RlmN">
    <location>
        <begin position="1"/>
        <end position="394"/>
    </location>
</feature>
<feature type="domain" description="Radical SAM core" evidence="2">
    <location>
        <begin position="122"/>
        <end position="365"/>
    </location>
</feature>
<feature type="active site" description="Proton acceptor" evidence="1">
    <location>
        <position position="116"/>
    </location>
</feature>
<feature type="active site" description="S-methylcysteine intermediate" evidence="1">
    <location>
        <position position="370"/>
    </location>
</feature>
<feature type="binding site" evidence="1">
    <location>
        <position position="136"/>
    </location>
    <ligand>
        <name>[4Fe-4S] cluster</name>
        <dbReference type="ChEBI" id="CHEBI:49883"/>
        <note>4Fe-4S-S-AdoMet</note>
    </ligand>
</feature>
<feature type="binding site" evidence="1">
    <location>
        <position position="140"/>
    </location>
    <ligand>
        <name>[4Fe-4S] cluster</name>
        <dbReference type="ChEBI" id="CHEBI:49883"/>
        <note>4Fe-4S-S-AdoMet</note>
    </ligand>
</feature>
<feature type="binding site" evidence="1">
    <location>
        <position position="143"/>
    </location>
    <ligand>
        <name>[4Fe-4S] cluster</name>
        <dbReference type="ChEBI" id="CHEBI:49883"/>
        <note>4Fe-4S-S-AdoMet</note>
    </ligand>
</feature>
<feature type="binding site" evidence="1">
    <location>
        <begin position="196"/>
        <end position="197"/>
    </location>
    <ligand>
        <name>S-adenosyl-L-methionine</name>
        <dbReference type="ChEBI" id="CHEBI:59789"/>
    </ligand>
</feature>
<feature type="binding site" evidence="1">
    <location>
        <position position="228"/>
    </location>
    <ligand>
        <name>S-adenosyl-L-methionine</name>
        <dbReference type="ChEBI" id="CHEBI:59789"/>
    </ligand>
</feature>
<feature type="binding site" evidence="1">
    <location>
        <begin position="250"/>
        <end position="252"/>
    </location>
    <ligand>
        <name>S-adenosyl-L-methionine</name>
        <dbReference type="ChEBI" id="CHEBI:59789"/>
    </ligand>
</feature>
<feature type="binding site" evidence="1">
    <location>
        <position position="327"/>
    </location>
    <ligand>
        <name>S-adenosyl-L-methionine</name>
        <dbReference type="ChEBI" id="CHEBI:59789"/>
    </ligand>
</feature>
<feature type="disulfide bond" description="(transient)" evidence="1">
    <location>
        <begin position="129"/>
        <end position="370"/>
    </location>
</feature>
<dbReference type="EC" id="2.1.1.192" evidence="1"/>
<dbReference type="EMBL" id="CP000830">
    <property type="protein sequence ID" value="ABV95044.1"/>
    <property type="status" value="ALT_INIT"/>
    <property type="molecule type" value="Genomic_DNA"/>
</dbReference>
<dbReference type="RefSeq" id="WP_044029070.1">
    <property type="nucleotide sequence ID" value="NC_009952.1"/>
</dbReference>
<dbReference type="SMR" id="A8LNF0"/>
<dbReference type="STRING" id="398580.Dshi_3311"/>
<dbReference type="KEGG" id="dsh:Dshi_3311"/>
<dbReference type="eggNOG" id="COG0820">
    <property type="taxonomic scope" value="Bacteria"/>
</dbReference>
<dbReference type="HOGENOM" id="CLU_029101_0_0_5"/>
<dbReference type="OrthoDB" id="9793973at2"/>
<dbReference type="Proteomes" id="UP000006833">
    <property type="component" value="Chromosome"/>
</dbReference>
<dbReference type="GO" id="GO:0005737">
    <property type="term" value="C:cytoplasm"/>
    <property type="evidence" value="ECO:0007669"/>
    <property type="project" value="UniProtKB-SubCell"/>
</dbReference>
<dbReference type="GO" id="GO:0051539">
    <property type="term" value="F:4 iron, 4 sulfur cluster binding"/>
    <property type="evidence" value="ECO:0007669"/>
    <property type="project" value="UniProtKB-UniRule"/>
</dbReference>
<dbReference type="GO" id="GO:0046872">
    <property type="term" value="F:metal ion binding"/>
    <property type="evidence" value="ECO:0007669"/>
    <property type="project" value="UniProtKB-KW"/>
</dbReference>
<dbReference type="GO" id="GO:0070040">
    <property type="term" value="F:rRNA (adenine(2503)-C2-)-methyltransferase activity"/>
    <property type="evidence" value="ECO:0007669"/>
    <property type="project" value="UniProtKB-UniRule"/>
</dbReference>
<dbReference type="GO" id="GO:0019843">
    <property type="term" value="F:rRNA binding"/>
    <property type="evidence" value="ECO:0007669"/>
    <property type="project" value="UniProtKB-UniRule"/>
</dbReference>
<dbReference type="GO" id="GO:0002935">
    <property type="term" value="F:tRNA (adenine(37)-C2)-methyltransferase activity"/>
    <property type="evidence" value="ECO:0007669"/>
    <property type="project" value="UniProtKB-UniRule"/>
</dbReference>
<dbReference type="GO" id="GO:0000049">
    <property type="term" value="F:tRNA binding"/>
    <property type="evidence" value="ECO:0007669"/>
    <property type="project" value="UniProtKB-UniRule"/>
</dbReference>
<dbReference type="GO" id="GO:0070475">
    <property type="term" value="P:rRNA base methylation"/>
    <property type="evidence" value="ECO:0007669"/>
    <property type="project" value="UniProtKB-UniRule"/>
</dbReference>
<dbReference type="GO" id="GO:0030488">
    <property type="term" value="P:tRNA methylation"/>
    <property type="evidence" value="ECO:0007669"/>
    <property type="project" value="UniProtKB-UniRule"/>
</dbReference>
<dbReference type="CDD" id="cd01335">
    <property type="entry name" value="Radical_SAM"/>
    <property type="match status" value="1"/>
</dbReference>
<dbReference type="FunFam" id="3.20.20.70:FF:000008">
    <property type="entry name" value="Dual-specificity RNA methyltransferase RlmN"/>
    <property type="match status" value="1"/>
</dbReference>
<dbReference type="Gene3D" id="1.10.150.530">
    <property type="match status" value="1"/>
</dbReference>
<dbReference type="Gene3D" id="3.20.20.70">
    <property type="entry name" value="Aldolase class I"/>
    <property type="match status" value="1"/>
</dbReference>
<dbReference type="HAMAP" id="MF_01849">
    <property type="entry name" value="RNA_methyltr_RlmN"/>
    <property type="match status" value="1"/>
</dbReference>
<dbReference type="InterPro" id="IPR013785">
    <property type="entry name" value="Aldolase_TIM"/>
</dbReference>
<dbReference type="InterPro" id="IPR040072">
    <property type="entry name" value="Methyltransferase_A"/>
</dbReference>
<dbReference type="InterPro" id="IPR048641">
    <property type="entry name" value="RlmN_N"/>
</dbReference>
<dbReference type="InterPro" id="IPR027492">
    <property type="entry name" value="RNA_MTrfase_RlmN"/>
</dbReference>
<dbReference type="InterPro" id="IPR004383">
    <property type="entry name" value="rRNA_lsu_MTrfase_RlmN/Cfr"/>
</dbReference>
<dbReference type="InterPro" id="IPR007197">
    <property type="entry name" value="rSAM"/>
</dbReference>
<dbReference type="NCBIfam" id="TIGR00048">
    <property type="entry name" value="rRNA_mod_RlmN"/>
    <property type="match status" value="1"/>
</dbReference>
<dbReference type="PANTHER" id="PTHR30544">
    <property type="entry name" value="23S RRNA METHYLTRANSFERASE"/>
    <property type="match status" value="1"/>
</dbReference>
<dbReference type="PANTHER" id="PTHR30544:SF5">
    <property type="entry name" value="RADICAL SAM CORE DOMAIN-CONTAINING PROTEIN"/>
    <property type="match status" value="1"/>
</dbReference>
<dbReference type="Pfam" id="PF04055">
    <property type="entry name" value="Radical_SAM"/>
    <property type="match status" value="1"/>
</dbReference>
<dbReference type="Pfam" id="PF21016">
    <property type="entry name" value="RlmN_N"/>
    <property type="match status" value="1"/>
</dbReference>
<dbReference type="PIRSF" id="PIRSF006004">
    <property type="entry name" value="CHP00048"/>
    <property type="match status" value="1"/>
</dbReference>
<dbReference type="SFLD" id="SFLDF00275">
    <property type="entry name" value="adenosine_C2_methyltransferase"/>
    <property type="match status" value="1"/>
</dbReference>
<dbReference type="SFLD" id="SFLDS00029">
    <property type="entry name" value="Radical_SAM"/>
    <property type="match status" value="1"/>
</dbReference>
<dbReference type="SUPFAM" id="SSF102114">
    <property type="entry name" value="Radical SAM enzymes"/>
    <property type="match status" value="1"/>
</dbReference>
<dbReference type="PROSITE" id="PS51918">
    <property type="entry name" value="RADICAL_SAM"/>
    <property type="match status" value="1"/>
</dbReference>
<gene>
    <name evidence="1" type="primary">rlmN</name>
    <name type="ordered locus">Dshi_3311</name>
</gene>